<accession>Q5R8C4</accession>
<evidence type="ECO:0000250" key="1">
    <source>
        <dbReference type="UniProtKB" id="Q7L2H7"/>
    </source>
</evidence>
<evidence type="ECO:0000255" key="2">
    <source>
        <dbReference type="HAMAP-Rule" id="MF_03012"/>
    </source>
</evidence>
<evidence type="ECO:0000255" key="3">
    <source>
        <dbReference type="PROSITE-ProRule" id="PRU01185"/>
    </source>
</evidence>
<reference key="1">
    <citation type="submission" date="2004-11" db="EMBL/GenBank/DDBJ databases">
        <authorList>
            <consortium name="The German cDNA consortium"/>
        </authorList>
    </citation>
    <scope>NUCLEOTIDE SEQUENCE [LARGE SCALE MRNA]</scope>
    <source>
        <tissue>Brain cortex</tissue>
    </source>
</reference>
<name>EIF3M_PONAB</name>
<sequence>MSVPAFIDISEEDQAAELRAYLKSKGAEISEENSEGGLHIDLAQIIEACDVCLKEDDKDVESVMNSVVSLLLILEPDKQEALIESLCEKLVKFREGERPSLRLQLLSNLFHGMDKNTPVRYTVYCSLIKVAASCGAIQYIPTELDQVRKWISDWNLTTEKKHTLLRLLYEALVDCKKSDAASKVMVELLGSYTEDNASQARVDAHRCIVRALKDPNAFLFDHLLTLKPVKFLEGELIHDLLTIFVSAKLASYVKFYQNNKDFIDSLGLLHEQNMAKMRLLTFMGMAVENKEISFDTMQQELQIGADDVEAFVIDAVRTKMVYCKIDQTQRKVVVSHSTHRTFGKQQWQQLYDTLNAWKQNLNKVKNSLLSLSDT</sequence>
<gene>
    <name evidence="2" type="primary">EIF3M</name>
</gene>
<dbReference type="EMBL" id="CR859829">
    <property type="protein sequence ID" value="CAH91986.1"/>
    <property type="molecule type" value="mRNA"/>
</dbReference>
<dbReference type="RefSeq" id="NP_001126153.1">
    <property type="nucleotide sequence ID" value="NM_001132681.1"/>
</dbReference>
<dbReference type="SMR" id="Q5R8C4"/>
<dbReference type="FunCoup" id="Q5R8C4">
    <property type="interactions" value="2836"/>
</dbReference>
<dbReference type="STRING" id="9601.ENSPPYP00000003882"/>
<dbReference type="Ensembl" id="ENSPPYT00000040084.1">
    <property type="protein sequence ID" value="ENSPPYP00000038882.1"/>
    <property type="gene ID" value="ENSPPYG00000038184.1"/>
</dbReference>
<dbReference type="GeneID" id="100173112"/>
<dbReference type="KEGG" id="pon:100173112"/>
<dbReference type="CTD" id="10480"/>
<dbReference type="eggNOG" id="KOG2753">
    <property type="taxonomic scope" value="Eukaryota"/>
</dbReference>
<dbReference type="GeneTree" id="ENSGT00390000004456"/>
<dbReference type="HOGENOM" id="CLU_035254_1_0_1"/>
<dbReference type="InParanoid" id="Q5R8C4"/>
<dbReference type="OrthoDB" id="10267031at2759"/>
<dbReference type="TreeFam" id="TF106148"/>
<dbReference type="Proteomes" id="UP000001595">
    <property type="component" value="Chromosome 11"/>
</dbReference>
<dbReference type="GO" id="GO:0016282">
    <property type="term" value="C:eukaryotic 43S preinitiation complex"/>
    <property type="evidence" value="ECO:0007669"/>
    <property type="project" value="UniProtKB-UniRule"/>
</dbReference>
<dbReference type="GO" id="GO:0033290">
    <property type="term" value="C:eukaryotic 48S preinitiation complex"/>
    <property type="evidence" value="ECO:0007669"/>
    <property type="project" value="UniProtKB-UniRule"/>
</dbReference>
<dbReference type="GO" id="GO:0071541">
    <property type="term" value="C:eukaryotic translation initiation factor 3 complex, eIF3m"/>
    <property type="evidence" value="ECO:0007669"/>
    <property type="project" value="UniProtKB-UniRule"/>
</dbReference>
<dbReference type="GO" id="GO:0003743">
    <property type="term" value="F:translation initiation factor activity"/>
    <property type="evidence" value="ECO:0007669"/>
    <property type="project" value="UniProtKB-UniRule"/>
</dbReference>
<dbReference type="GO" id="GO:0001732">
    <property type="term" value="P:formation of cytoplasmic translation initiation complex"/>
    <property type="evidence" value="ECO:0007669"/>
    <property type="project" value="UniProtKB-UniRule"/>
</dbReference>
<dbReference type="HAMAP" id="MF_03012">
    <property type="entry name" value="eIF3m"/>
    <property type="match status" value="1"/>
</dbReference>
<dbReference type="InterPro" id="IPR016024">
    <property type="entry name" value="ARM-type_fold"/>
</dbReference>
<dbReference type="InterPro" id="IPR045237">
    <property type="entry name" value="COPS7/eIF3m"/>
</dbReference>
<dbReference type="InterPro" id="IPR027528">
    <property type="entry name" value="eIF3m"/>
</dbReference>
<dbReference type="InterPro" id="IPR040750">
    <property type="entry name" value="eIF3m_C_helix"/>
</dbReference>
<dbReference type="InterPro" id="IPR000717">
    <property type="entry name" value="PCI_dom"/>
</dbReference>
<dbReference type="InterPro" id="IPR036390">
    <property type="entry name" value="WH_DNA-bd_sf"/>
</dbReference>
<dbReference type="PANTHER" id="PTHR15350">
    <property type="entry name" value="COP9 SIGNALOSOME COMPLEX SUBUNIT 7/DENDRITIC CELL PROTEIN GA17"/>
    <property type="match status" value="1"/>
</dbReference>
<dbReference type="PANTHER" id="PTHR15350:SF2">
    <property type="entry name" value="EUKARYOTIC TRANSLATION INITIATION FACTOR 3 SUBUNIT M"/>
    <property type="match status" value="1"/>
</dbReference>
<dbReference type="Pfam" id="PF18005">
    <property type="entry name" value="eIF3m_C_helix"/>
    <property type="match status" value="1"/>
</dbReference>
<dbReference type="Pfam" id="PF01399">
    <property type="entry name" value="PCI"/>
    <property type="match status" value="1"/>
</dbReference>
<dbReference type="SMART" id="SM00088">
    <property type="entry name" value="PINT"/>
    <property type="match status" value="1"/>
</dbReference>
<dbReference type="SUPFAM" id="SSF48371">
    <property type="entry name" value="ARM repeat"/>
    <property type="match status" value="1"/>
</dbReference>
<dbReference type="SUPFAM" id="SSF46785">
    <property type="entry name" value="Winged helix' DNA-binding domain"/>
    <property type="match status" value="1"/>
</dbReference>
<dbReference type="PROSITE" id="PS50250">
    <property type="entry name" value="PCI"/>
    <property type="match status" value="1"/>
</dbReference>
<organism>
    <name type="scientific">Pongo abelii</name>
    <name type="common">Sumatran orangutan</name>
    <name type="synonym">Pongo pygmaeus abelii</name>
    <dbReference type="NCBI Taxonomy" id="9601"/>
    <lineage>
        <taxon>Eukaryota</taxon>
        <taxon>Metazoa</taxon>
        <taxon>Chordata</taxon>
        <taxon>Craniata</taxon>
        <taxon>Vertebrata</taxon>
        <taxon>Euteleostomi</taxon>
        <taxon>Mammalia</taxon>
        <taxon>Eutheria</taxon>
        <taxon>Euarchontoglires</taxon>
        <taxon>Primates</taxon>
        <taxon>Haplorrhini</taxon>
        <taxon>Catarrhini</taxon>
        <taxon>Hominidae</taxon>
        <taxon>Pongo</taxon>
    </lineage>
</organism>
<comment type="function">
    <text evidence="2">Component of the eukaryotic translation initiation factor 3 (eIF-3) complex, which is required for several steps in the initiation of protein synthesis. The eIF-3 complex associates with the 40S ribosome and facilitates the recruitment of eIF-1, eIF-1A, eIF-2:GTP:methionyl-tRNAi and eIF-5 to form the 43S pre-initiation complex (43S PIC). The eIF-3 complex stimulates mRNA recruitment to the 43S PIC and scanning of the mRNA for AUG recognition. The eIF-3 complex is also required for disassembly and recycling of post-termination ribosomal complexes and subsequently prevents premature joining of the 40S and 60S ribosomal subunits prior to initiation. The eIF-3 complex specifically targets and initiates translation of a subset of mRNAs involved in cell proliferation, including cell cycling, differentiation and apoptosis, and uses different modes of RNA stem-loop binding to exert either translational activation or repression.</text>
</comment>
<comment type="subunit">
    <text evidence="2">Component of the eukaryotic translation initiation factor 3 (eIF-3) complex, which is composed of 13 subunits: EIF3A, EIF3B, EIF3C, EIF3D, EIF3E, EIF3F, EIF3G, EIF3H, EIF3I, EIF3J, EIF3K, EIF3L and EIF3M. The eIF-3 complex appears to include 3 stable modules: module A is composed of EIF3A, EIF3B, EIF3G and EIF3I; module B is composed of EIF3F, EIF3H, and EIF3M; and module C is composed of EIF3C, EIF3D, EIF3E, EIF3K and EIF3L. EIF3C of module C binds EIF3B of module A and EIF3H of module B, thereby linking the three modules. EIF3J is a labile subunit that binds to the eIF-3 complex via EIF3B. The eIF-3 complex interacts with RPS6KB1 under conditions of nutrient depletion. Mitogenic stimulation leads to binding and activation of a complex composed of MTOR and RPTOR, leading to phosphorylation and release of RPS6KB1 and binding of EIF4B to eIF-3.</text>
</comment>
<comment type="subcellular location">
    <subcellularLocation>
        <location evidence="2">Cytoplasm</location>
    </subcellularLocation>
</comment>
<comment type="similarity">
    <text evidence="2">Belongs to the eIF-3 subunit M family.</text>
</comment>
<keyword id="KW-0007">Acetylation</keyword>
<keyword id="KW-0963">Cytoplasm</keyword>
<keyword id="KW-0396">Initiation factor</keyword>
<keyword id="KW-0597">Phosphoprotein</keyword>
<keyword id="KW-0648">Protein biosynthesis</keyword>
<keyword id="KW-1185">Reference proteome</keyword>
<feature type="initiator methionine" description="Removed" evidence="2">
    <location>
        <position position="1"/>
    </location>
</feature>
<feature type="chain" id="PRO_0000308197" description="Eukaryotic translation initiation factor 3 subunit M">
    <location>
        <begin position="2"/>
        <end position="374"/>
    </location>
</feature>
<feature type="domain" description="PCI" evidence="3">
    <location>
        <begin position="180"/>
        <end position="339"/>
    </location>
</feature>
<feature type="modified residue" description="N-acetylserine" evidence="1 2">
    <location>
        <position position="2"/>
    </location>
</feature>
<feature type="modified residue" description="Phosphoserine" evidence="1">
    <location>
        <position position="2"/>
    </location>
</feature>
<feature type="modified residue" description="Phosphoserine" evidence="1">
    <location>
        <position position="152"/>
    </location>
</feature>
<feature type="modified residue" description="N6-acetyllysine" evidence="1">
    <location>
        <position position="254"/>
    </location>
</feature>
<feature type="modified residue" description="Phosphoserine" evidence="1">
    <location>
        <position position="367"/>
    </location>
</feature>
<proteinExistence type="evidence at transcript level"/>
<protein>
    <recommendedName>
        <fullName evidence="2">Eukaryotic translation initiation factor 3 subunit M</fullName>
        <shortName evidence="2">eIF3m</shortName>
    </recommendedName>
</protein>